<feature type="chain" id="PRO_1000123580" description="Thymidylate kinase">
    <location>
        <begin position="1"/>
        <end position="207"/>
    </location>
</feature>
<feature type="binding site" evidence="1">
    <location>
        <begin position="10"/>
        <end position="17"/>
    </location>
    <ligand>
        <name>ATP</name>
        <dbReference type="ChEBI" id="CHEBI:30616"/>
    </ligand>
</feature>
<keyword id="KW-0067">ATP-binding</keyword>
<keyword id="KW-0418">Kinase</keyword>
<keyword id="KW-0545">Nucleotide biosynthesis</keyword>
<keyword id="KW-0547">Nucleotide-binding</keyword>
<keyword id="KW-1185">Reference proteome</keyword>
<keyword id="KW-0808">Transferase</keyword>
<evidence type="ECO:0000255" key="1">
    <source>
        <dbReference type="HAMAP-Rule" id="MF_00165"/>
    </source>
</evidence>
<name>KTHY_HALOH</name>
<reference key="1">
    <citation type="journal article" date="2009" name="PLoS ONE">
        <title>Genome analysis of the anaerobic thermohalophilic bacterium Halothermothrix orenii.</title>
        <authorList>
            <person name="Mavromatis K."/>
            <person name="Ivanova N."/>
            <person name="Anderson I."/>
            <person name="Lykidis A."/>
            <person name="Hooper S.D."/>
            <person name="Sun H."/>
            <person name="Kunin V."/>
            <person name="Lapidus A."/>
            <person name="Hugenholtz P."/>
            <person name="Patel B."/>
            <person name="Kyrpides N.C."/>
        </authorList>
    </citation>
    <scope>NUCLEOTIDE SEQUENCE [LARGE SCALE GENOMIC DNA]</scope>
    <source>
        <strain>H 168 / OCM 544 / DSM 9562</strain>
    </source>
</reference>
<dbReference type="EC" id="2.7.4.9" evidence="1"/>
<dbReference type="EMBL" id="CP001098">
    <property type="protein sequence ID" value="ACL70783.1"/>
    <property type="molecule type" value="Genomic_DNA"/>
</dbReference>
<dbReference type="RefSeq" id="WP_015923752.1">
    <property type="nucleotide sequence ID" value="NC_011899.1"/>
</dbReference>
<dbReference type="SMR" id="B8CZT1"/>
<dbReference type="STRING" id="373903.Hore_20380"/>
<dbReference type="KEGG" id="hor:Hore_20380"/>
<dbReference type="eggNOG" id="COG0125">
    <property type="taxonomic scope" value="Bacteria"/>
</dbReference>
<dbReference type="HOGENOM" id="CLU_049131_0_2_9"/>
<dbReference type="OrthoDB" id="9774907at2"/>
<dbReference type="Proteomes" id="UP000000719">
    <property type="component" value="Chromosome"/>
</dbReference>
<dbReference type="GO" id="GO:0005829">
    <property type="term" value="C:cytosol"/>
    <property type="evidence" value="ECO:0007669"/>
    <property type="project" value="TreeGrafter"/>
</dbReference>
<dbReference type="GO" id="GO:0005524">
    <property type="term" value="F:ATP binding"/>
    <property type="evidence" value="ECO:0007669"/>
    <property type="project" value="UniProtKB-UniRule"/>
</dbReference>
<dbReference type="GO" id="GO:0004798">
    <property type="term" value="F:dTMP kinase activity"/>
    <property type="evidence" value="ECO:0007669"/>
    <property type="project" value="UniProtKB-UniRule"/>
</dbReference>
<dbReference type="GO" id="GO:0006233">
    <property type="term" value="P:dTDP biosynthetic process"/>
    <property type="evidence" value="ECO:0007669"/>
    <property type="project" value="InterPro"/>
</dbReference>
<dbReference type="GO" id="GO:0006235">
    <property type="term" value="P:dTTP biosynthetic process"/>
    <property type="evidence" value="ECO:0007669"/>
    <property type="project" value="UniProtKB-UniRule"/>
</dbReference>
<dbReference type="GO" id="GO:0006227">
    <property type="term" value="P:dUDP biosynthetic process"/>
    <property type="evidence" value="ECO:0007669"/>
    <property type="project" value="TreeGrafter"/>
</dbReference>
<dbReference type="CDD" id="cd01672">
    <property type="entry name" value="TMPK"/>
    <property type="match status" value="1"/>
</dbReference>
<dbReference type="FunFam" id="3.40.50.300:FF:000225">
    <property type="entry name" value="Thymidylate kinase"/>
    <property type="match status" value="1"/>
</dbReference>
<dbReference type="Gene3D" id="3.40.50.300">
    <property type="entry name" value="P-loop containing nucleotide triphosphate hydrolases"/>
    <property type="match status" value="1"/>
</dbReference>
<dbReference type="HAMAP" id="MF_00165">
    <property type="entry name" value="Thymidylate_kinase"/>
    <property type="match status" value="1"/>
</dbReference>
<dbReference type="InterPro" id="IPR027417">
    <property type="entry name" value="P-loop_NTPase"/>
</dbReference>
<dbReference type="InterPro" id="IPR039430">
    <property type="entry name" value="Thymidylate_kin-like_dom"/>
</dbReference>
<dbReference type="InterPro" id="IPR018094">
    <property type="entry name" value="Thymidylate_kinase"/>
</dbReference>
<dbReference type="NCBIfam" id="TIGR00041">
    <property type="entry name" value="DTMP_kinase"/>
    <property type="match status" value="1"/>
</dbReference>
<dbReference type="PANTHER" id="PTHR10344">
    <property type="entry name" value="THYMIDYLATE KINASE"/>
    <property type="match status" value="1"/>
</dbReference>
<dbReference type="PANTHER" id="PTHR10344:SF4">
    <property type="entry name" value="UMP-CMP KINASE 2, MITOCHONDRIAL"/>
    <property type="match status" value="1"/>
</dbReference>
<dbReference type="Pfam" id="PF02223">
    <property type="entry name" value="Thymidylate_kin"/>
    <property type="match status" value="1"/>
</dbReference>
<dbReference type="SUPFAM" id="SSF52540">
    <property type="entry name" value="P-loop containing nucleoside triphosphate hydrolases"/>
    <property type="match status" value="1"/>
</dbReference>
<sequence length="207" mass="23700">MRGLFITLEGIEGSGKSTQIEMLYKRLKKDGFDVIITREPGGTPIGKEIRKLLLDPDNIMGAKAEFLLYAADRAQHVVELIKPALESGKVVLADRFIDSSIAYQGYGRGLDIDVVKTVNEWVIDGCWPDLTFVLDLDVEKGLERARGYSPDNQGDRLERELVTFHRRVRQAYHQLAEDRRFIMLDADRSREEIHREIYHKVKGCLIK</sequence>
<accession>B8CZT1</accession>
<protein>
    <recommendedName>
        <fullName evidence="1">Thymidylate kinase</fullName>
        <ecNumber evidence="1">2.7.4.9</ecNumber>
    </recommendedName>
    <alternativeName>
        <fullName evidence="1">dTMP kinase</fullName>
    </alternativeName>
</protein>
<comment type="function">
    <text evidence="1">Phosphorylation of dTMP to form dTDP in both de novo and salvage pathways of dTTP synthesis.</text>
</comment>
<comment type="catalytic activity">
    <reaction evidence="1">
        <text>dTMP + ATP = dTDP + ADP</text>
        <dbReference type="Rhea" id="RHEA:13517"/>
        <dbReference type="ChEBI" id="CHEBI:30616"/>
        <dbReference type="ChEBI" id="CHEBI:58369"/>
        <dbReference type="ChEBI" id="CHEBI:63528"/>
        <dbReference type="ChEBI" id="CHEBI:456216"/>
        <dbReference type="EC" id="2.7.4.9"/>
    </reaction>
</comment>
<comment type="similarity">
    <text evidence="1">Belongs to the thymidylate kinase family.</text>
</comment>
<gene>
    <name evidence="1" type="primary">tmk</name>
    <name type="ordered locus">Hore_20380</name>
</gene>
<proteinExistence type="inferred from homology"/>
<organism>
    <name type="scientific">Halothermothrix orenii (strain H 168 / OCM 544 / DSM 9562)</name>
    <dbReference type="NCBI Taxonomy" id="373903"/>
    <lineage>
        <taxon>Bacteria</taxon>
        <taxon>Bacillati</taxon>
        <taxon>Bacillota</taxon>
        <taxon>Clostridia</taxon>
        <taxon>Halanaerobiales</taxon>
        <taxon>Halothermotrichaceae</taxon>
        <taxon>Halothermothrix</taxon>
    </lineage>
</organism>